<protein>
    <recommendedName>
        <fullName>Proliferating cell nuclear antigen</fullName>
        <shortName>PCNA</shortName>
    </recommendedName>
</protein>
<gene>
    <name type="primary">pcna</name>
    <name type="ORF">DDB_G0287607</name>
</gene>
<name>PCNA_DICDI</name>
<feature type="chain" id="PRO_0000329023" description="Proliferating cell nuclear antigen">
    <location>
        <begin position="1"/>
        <end position="258"/>
    </location>
</feature>
<feature type="DNA-binding region" evidence="2">
    <location>
        <begin position="61"/>
        <end position="80"/>
    </location>
</feature>
<comment type="function">
    <text evidence="1">This protein is an auxiliary protein of DNA polymerase delta and is involved in the control of eukaryotic DNA replication by increasing the polymerase's processibility during elongation of the leading strand.</text>
</comment>
<comment type="subunit">
    <text evidence="1">Homotrimer. Forms a complex with activator 1 heteropentamer in the presence of ATP (By similarity).</text>
</comment>
<comment type="subcellular location">
    <subcellularLocation>
        <location evidence="1">Nucleus</location>
    </subcellularLocation>
</comment>
<comment type="similarity">
    <text evidence="3">Belongs to the PCNA family.</text>
</comment>
<dbReference type="EMBL" id="AAFI02000103">
    <property type="protein sequence ID" value="EAL63612.1"/>
    <property type="molecule type" value="Genomic_DNA"/>
</dbReference>
<dbReference type="RefSeq" id="XP_637117.1">
    <property type="nucleotide sequence ID" value="XM_632025.1"/>
</dbReference>
<dbReference type="SMR" id="Q54K47"/>
<dbReference type="FunCoup" id="Q54K47">
    <property type="interactions" value="987"/>
</dbReference>
<dbReference type="STRING" id="44689.Q54K47"/>
<dbReference type="PaxDb" id="44689-DDB0231779"/>
<dbReference type="EnsemblProtists" id="EAL63612">
    <property type="protein sequence ID" value="EAL63612"/>
    <property type="gene ID" value="DDB_G0287607"/>
</dbReference>
<dbReference type="GeneID" id="8626212"/>
<dbReference type="KEGG" id="ddi:DDB_G0287607"/>
<dbReference type="dictyBase" id="DDB_G0287607">
    <property type="gene designation" value="pcna"/>
</dbReference>
<dbReference type="VEuPathDB" id="AmoebaDB:DDB_G0287607"/>
<dbReference type="eggNOG" id="KOG1636">
    <property type="taxonomic scope" value="Eukaryota"/>
</dbReference>
<dbReference type="HOGENOM" id="CLU_043978_3_0_1"/>
<dbReference type="InParanoid" id="Q54K47"/>
<dbReference type="OMA" id="EMKLINM"/>
<dbReference type="PhylomeDB" id="Q54K47"/>
<dbReference type="Reactome" id="R-DDI-110314">
    <property type="pathway name" value="Recognition of DNA damage by PCNA-containing replication complex"/>
</dbReference>
<dbReference type="Reactome" id="R-DDI-4615885">
    <property type="pathway name" value="SUMOylation of DNA replication proteins"/>
</dbReference>
<dbReference type="Reactome" id="R-DDI-5358565">
    <property type="pathway name" value="Mismatch repair (MMR) directed by MSH2:MSH6 (MutSalpha)"/>
</dbReference>
<dbReference type="Reactome" id="R-DDI-5651801">
    <property type="pathway name" value="PCNA-Dependent Long Patch Base Excision Repair"/>
</dbReference>
<dbReference type="Reactome" id="R-DDI-5655862">
    <property type="pathway name" value="Translesion synthesis by POLK"/>
</dbReference>
<dbReference type="Reactome" id="R-DDI-5656169">
    <property type="pathway name" value="Termination of translesion DNA synthesis"/>
</dbReference>
<dbReference type="Reactome" id="R-DDI-5696397">
    <property type="pathway name" value="Gap-filling DNA repair synthesis and ligation in GG-NER"/>
</dbReference>
<dbReference type="Reactome" id="R-DDI-6782135">
    <property type="pathway name" value="Dual incision in TC-NER"/>
</dbReference>
<dbReference type="Reactome" id="R-DDI-6782210">
    <property type="pathway name" value="Gap-filling DNA repair synthesis and ligation in TC-NER"/>
</dbReference>
<dbReference type="Reactome" id="R-DDI-69091">
    <property type="pathway name" value="Polymerase switching"/>
</dbReference>
<dbReference type="Reactome" id="R-DDI-69166">
    <property type="pathway name" value="Removal of the Flap Intermediate"/>
</dbReference>
<dbReference type="Reactome" id="R-DDI-69183">
    <property type="pathway name" value="Processive synthesis on the lagging strand"/>
</dbReference>
<dbReference type="Reactome" id="R-DDI-8866654">
    <property type="pathway name" value="E3 ubiquitin ligases ubiquitinate target proteins"/>
</dbReference>
<dbReference type="PRO" id="PR:Q54K47"/>
<dbReference type="Proteomes" id="UP000002195">
    <property type="component" value="Chromosome 5"/>
</dbReference>
<dbReference type="GO" id="GO:0005634">
    <property type="term" value="C:nucleus"/>
    <property type="evidence" value="ECO:0000314"/>
    <property type="project" value="dictyBase"/>
</dbReference>
<dbReference type="GO" id="GO:0043626">
    <property type="term" value="C:PCNA complex"/>
    <property type="evidence" value="ECO:0000250"/>
    <property type="project" value="dictyBase"/>
</dbReference>
<dbReference type="GO" id="GO:0003677">
    <property type="term" value="F:DNA binding"/>
    <property type="evidence" value="ECO:0007669"/>
    <property type="project" value="UniProtKB-KW"/>
</dbReference>
<dbReference type="GO" id="GO:0030337">
    <property type="term" value="F:DNA polymerase processivity factor activity"/>
    <property type="evidence" value="ECO:0000250"/>
    <property type="project" value="dictyBase"/>
</dbReference>
<dbReference type="GO" id="GO:0006273">
    <property type="term" value="P:lagging strand elongation"/>
    <property type="evidence" value="ECO:0000250"/>
    <property type="project" value="dictyBase"/>
</dbReference>
<dbReference type="GO" id="GO:0006272">
    <property type="term" value="P:leading strand elongation"/>
    <property type="evidence" value="ECO:0000250"/>
    <property type="project" value="dictyBase"/>
</dbReference>
<dbReference type="GO" id="GO:0006298">
    <property type="term" value="P:mismatch repair"/>
    <property type="evidence" value="ECO:0000318"/>
    <property type="project" value="GO_Central"/>
</dbReference>
<dbReference type="GO" id="GO:0006275">
    <property type="term" value="P:regulation of DNA replication"/>
    <property type="evidence" value="ECO:0007669"/>
    <property type="project" value="InterPro"/>
</dbReference>
<dbReference type="GO" id="GO:0019985">
    <property type="term" value="P:translesion synthesis"/>
    <property type="evidence" value="ECO:0000318"/>
    <property type="project" value="GO_Central"/>
</dbReference>
<dbReference type="CDD" id="cd00577">
    <property type="entry name" value="PCNA"/>
    <property type="match status" value="1"/>
</dbReference>
<dbReference type="FunFam" id="3.70.10.10:FF:000001">
    <property type="entry name" value="Proliferating cell nuclear antigen"/>
    <property type="match status" value="1"/>
</dbReference>
<dbReference type="Gene3D" id="3.70.10.10">
    <property type="match status" value="1"/>
</dbReference>
<dbReference type="HAMAP" id="MF_00317">
    <property type="entry name" value="DNApol_clamp_arch"/>
    <property type="match status" value="1"/>
</dbReference>
<dbReference type="InterPro" id="IPR046938">
    <property type="entry name" value="DNA_clamp_sf"/>
</dbReference>
<dbReference type="InterPro" id="IPR000730">
    <property type="entry name" value="Pr_cel_nuc_antig"/>
</dbReference>
<dbReference type="InterPro" id="IPR022649">
    <property type="entry name" value="Pr_cel_nuc_antig_C"/>
</dbReference>
<dbReference type="InterPro" id="IPR022648">
    <property type="entry name" value="Pr_cel_nuc_antig_N"/>
</dbReference>
<dbReference type="NCBIfam" id="TIGR00590">
    <property type="entry name" value="pcna"/>
    <property type="match status" value="1"/>
</dbReference>
<dbReference type="PANTHER" id="PTHR11352">
    <property type="entry name" value="PROLIFERATING CELL NUCLEAR ANTIGEN"/>
    <property type="match status" value="1"/>
</dbReference>
<dbReference type="PANTHER" id="PTHR11352:SF0">
    <property type="entry name" value="PROLIFERATING CELL NUCLEAR ANTIGEN"/>
    <property type="match status" value="1"/>
</dbReference>
<dbReference type="Pfam" id="PF02747">
    <property type="entry name" value="PCNA_C"/>
    <property type="match status" value="1"/>
</dbReference>
<dbReference type="Pfam" id="PF00705">
    <property type="entry name" value="PCNA_N"/>
    <property type="match status" value="1"/>
</dbReference>
<dbReference type="PRINTS" id="PR00339">
    <property type="entry name" value="PCNACYCLIN"/>
</dbReference>
<dbReference type="SUPFAM" id="SSF55979">
    <property type="entry name" value="DNA clamp"/>
    <property type="match status" value="2"/>
</dbReference>
<reference key="1">
    <citation type="journal article" date="2005" name="Nature">
        <title>The genome of the social amoeba Dictyostelium discoideum.</title>
        <authorList>
            <person name="Eichinger L."/>
            <person name="Pachebat J.A."/>
            <person name="Gloeckner G."/>
            <person name="Rajandream M.A."/>
            <person name="Sucgang R."/>
            <person name="Berriman M."/>
            <person name="Song J."/>
            <person name="Olsen R."/>
            <person name="Szafranski K."/>
            <person name="Xu Q."/>
            <person name="Tunggal B."/>
            <person name="Kummerfeld S."/>
            <person name="Madera M."/>
            <person name="Konfortov B.A."/>
            <person name="Rivero F."/>
            <person name="Bankier A.T."/>
            <person name="Lehmann R."/>
            <person name="Hamlin N."/>
            <person name="Davies R."/>
            <person name="Gaudet P."/>
            <person name="Fey P."/>
            <person name="Pilcher K."/>
            <person name="Chen G."/>
            <person name="Saunders D."/>
            <person name="Sodergren E.J."/>
            <person name="Davis P."/>
            <person name="Kerhornou A."/>
            <person name="Nie X."/>
            <person name="Hall N."/>
            <person name="Anjard C."/>
            <person name="Hemphill L."/>
            <person name="Bason N."/>
            <person name="Farbrother P."/>
            <person name="Desany B."/>
            <person name="Just E."/>
            <person name="Morio T."/>
            <person name="Rost R."/>
            <person name="Churcher C.M."/>
            <person name="Cooper J."/>
            <person name="Haydock S."/>
            <person name="van Driessche N."/>
            <person name="Cronin A."/>
            <person name="Goodhead I."/>
            <person name="Muzny D.M."/>
            <person name="Mourier T."/>
            <person name="Pain A."/>
            <person name="Lu M."/>
            <person name="Harper D."/>
            <person name="Lindsay R."/>
            <person name="Hauser H."/>
            <person name="James K.D."/>
            <person name="Quiles M."/>
            <person name="Madan Babu M."/>
            <person name="Saito T."/>
            <person name="Buchrieser C."/>
            <person name="Wardroper A."/>
            <person name="Felder M."/>
            <person name="Thangavelu M."/>
            <person name="Johnson D."/>
            <person name="Knights A."/>
            <person name="Loulseged H."/>
            <person name="Mungall K.L."/>
            <person name="Oliver K."/>
            <person name="Price C."/>
            <person name="Quail M.A."/>
            <person name="Urushihara H."/>
            <person name="Hernandez J."/>
            <person name="Rabbinowitsch E."/>
            <person name="Steffen D."/>
            <person name="Sanders M."/>
            <person name="Ma J."/>
            <person name="Kohara Y."/>
            <person name="Sharp S."/>
            <person name="Simmonds M.N."/>
            <person name="Spiegler S."/>
            <person name="Tivey A."/>
            <person name="Sugano S."/>
            <person name="White B."/>
            <person name="Walker D."/>
            <person name="Woodward J.R."/>
            <person name="Winckler T."/>
            <person name="Tanaka Y."/>
            <person name="Shaulsky G."/>
            <person name="Schleicher M."/>
            <person name="Weinstock G.M."/>
            <person name="Rosenthal A."/>
            <person name="Cox E.C."/>
            <person name="Chisholm R.L."/>
            <person name="Gibbs R.A."/>
            <person name="Loomis W.F."/>
            <person name="Platzer M."/>
            <person name="Kay R.R."/>
            <person name="Williams J.G."/>
            <person name="Dear P.H."/>
            <person name="Noegel A.A."/>
            <person name="Barrell B.G."/>
            <person name="Kuspa A."/>
        </authorList>
    </citation>
    <scope>NUCLEOTIDE SEQUENCE [LARGE SCALE GENOMIC DNA]</scope>
    <source>
        <strain>AX4</strain>
    </source>
</reference>
<organism>
    <name type="scientific">Dictyostelium discoideum</name>
    <name type="common">Social amoeba</name>
    <dbReference type="NCBI Taxonomy" id="44689"/>
    <lineage>
        <taxon>Eukaryota</taxon>
        <taxon>Amoebozoa</taxon>
        <taxon>Evosea</taxon>
        <taxon>Eumycetozoa</taxon>
        <taxon>Dictyostelia</taxon>
        <taxon>Dictyosteliales</taxon>
        <taxon>Dictyosteliaceae</taxon>
        <taxon>Dictyostelium</taxon>
    </lineage>
</organism>
<keyword id="KW-0235">DNA replication</keyword>
<keyword id="KW-0238">DNA-binding</keyword>
<keyword id="KW-0539">Nucleus</keyword>
<keyword id="KW-1185">Reference proteome</keyword>
<sequence length="258" mass="28314">MFEARLLQASLLKKILESIKDLVESANFDCSPEGISLQAMDGTHVTLINLVLRNEGFETYNCDRSLSLGLSLVSLSKILKCAGNDDTLTIRARDNESDTVTFVFESPKNDRVSDFEIKLIDIKNEQYSIRKSDYSAVIKMPSAELQRICRDLSIIGEIVTISANKEGVKFSVSGDSGSGNITIKPTSDSDVPAEQATVIESKEPVVLNFALKFLSNFTKATPLSPMVTLSMSEGIPVVVEYKIDDLGFLGFFLAPKIE</sequence>
<accession>Q54K47</accession>
<proteinExistence type="inferred from homology"/>
<evidence type="ECO:0000250" key="1"/>
<evidence type="ECO:0000255" key="2"/>
<evidence type="ECO:0000305" key="3"/>